<gene>
    <name evidence="1" type="primary">psbT</name>
</gene>
<geneLocation type="chloroplast"/>
<keyword id="KW-0150">Chloroplast</keyword>
<keyword id="KW-0472">Membrane</keyword>
<keyword id="KW-0602">Photosynthesis</keyword>
<keyword id="KW-0604">Photosystem II</keyword>
<keyword id="KW-0934">Plastid</keyword>
<keyword id="KW-0793">Thylakoid</keyword>
<keyword id="KW-0812">Transmembrane</keyword>
<keyword id="KW-1133">Transmembrane helix</keyword>
<organism>
    <name type="scientific">Typha angustifolia</name>
    <name type="common">Narrow leaf cattail</name>
    <dbReference type="NCBI Taxonomy" id="59011"/>
    <lineage>
        <taxon>Eukaryota</taxon>
        <taxon>Viridiplantae</taxon>
        <taxon>Streptophyta</taxon>
        <taxon>Embryophyta</taxon>
        <taxon>Tracheophyta</taxon>
        <taxon>Spermatophyta</taxon>
        <taxon>Magnoliopsida</taxon>
        <taxon>Liliopsida</taxon>
        <taxon>Poales</taxon>
        <taxon>Typhaceae</taxon>
        <taxon>Typha</taxon>
    </lineage>
</organism>
<comment type="function">
    <text evidence="1">Found at the monomer-monomer interface of the photosystem II (PS II) dimer, plays a role in assembly and dimerization of PSII. PSII is a light-driven water plastoquinone oxidoreductase, using light energy to abstract electrons from H(2)O, generating a proton gradient subsequently used for ATP formation.</text>
</comment>
<comment type="subunit">
    <text evidence="1">PSII is composed of 1 copy each of membrane proteins PsbA, PsbB, PsbC, PsbD, PsbE, PsbF, PsbH, PsbI, PsbJ, PsbK, PsbL, PsbM, PsbT, PsbY, PsbZ, Psb30/Ycf12, at least 3 peripheral proteins of the oxygen-evolving complex and a large number of cofactors. It forms dimeric complexes.</text>
</comment>
<comment type="subcellular location">
    <subcellularLocation>
        <location evidence="1">Plastid</location>
        <location evidence="1">Chloroplast thylakoid membrane</location>
        <topology evidence="1">Single-pass membrane protein</topology>
    </subcellularLocation>
</comment>
<comment type="similarity">
    <text evidence="1">Belongs to the PsbT family.</text>
</comment>
<feature type="chain" id="PRO_0000217994" description="Photosystem II reaction center protein T">
    <location>
        <begin position="1"/>
        <end position="33"/>
    </location>
</feature>
<feature type="transmembrane region" description="Helical" evidence="1">
    <location>
        <begin position="3"/>
        <end position="23"/>
    </location>
</feature>
<accession>Q67I34</accession>
<protein>
    <recommendedName>
        <fullName evidence="1">Photosystem II reaction center protein T</fullName>
        <shortName evidence="1">PSII-T</shortName>
    </recommendedName>
</protein>
<evidence type="ECO:0000255" key="1">
    <source>
        <dbReference type="HAMAP-Rule" id="MF_00808"/>
    </source>
</evidence>
<reference key="1">
    <citation type="submission" date="2002-09" db="EMBL/GenBank/DDBJ databases">
        <title>Phylogenetic relationships among the major lineages of Asparagales based on a large chloroplast data set.</title>
        <authorList>
            <person name="McPherson M.A."/>
            <person name="Rai H.S."/>
            <person name="Wong W.A."/>
            <person name="Graham S.W."/>
        </authorList>
    </citation>
    <scope>NUCLEOTIDE SEQUENCE [GENOMIC DNA]</scope>
</reference>
<sequence>MEALVYTFLLVSTLGIIFFAIFFREPPKVPTKK</sequence>
<proteinExistence type="inferred from homology"/>
<name>PSBT_TYPAN</name>
<dbReference type="EMBL" id="AY147517">
    <property type="protein sequence ID" value="AAN32169.1"/>
    <property type="molecule type" value="Genomic_DNA"/>
</dbReference>
<dbReference type="SMR" id="Q67I34"/>
<dbReference type="GO" id="GO:0009535">
    <property type="term" value="C:chloroplast thylakoid membrane"/>
    <property type="evidence" value="ECO:0007669"/>
    <property type="project" value="UniProtKB-SubCell"/>
</dbReference>
<dbReference type="GO" id="GO:0009539">
    <property type="term" value="C:photosystem II reaction center"/>
    <property type="evidence" value="ECO:0007669"/>
    <property type="project" value="InterPro"/>
</dbReference>
<dbReference type="GO" id="GO:0015979">
    <property type="term" value="P:photosynthesis"/>
    <property type="evidence" value="ECO:0007669"/>
    <property type="project" value="UniProtKB-UniRule"/>
</dbReference>
<dbReference type="HAMAP" id="MF_00808">
    <property type="entry name" value="PSII_PsbT"/>
    <property type="match status" value="1"/>
</dbReference>
<dbReference type="InterPro" id="IPR001743">
    <property type="entry name" value="PSII_PsbT"/>
</dbReference>
<dbReference type="InterPro" id="IPR037268">
    <property type="entry name" value="PSII_PsbT_sf"/>
</dbReference>
<dbReference type="PANTHER" id="PTHR36411">
    <property type="match status" value="1"/>
</dbReference>
<dbReference type="PANTHER" id="PTHR36411:SF2">
    <property type="entry name" value="PHOTOSYSTEM II REACTION CENTER PROTEIN T"/>
    <property type="match status" value="1"/>
</dbReference>
<dbReference type="Pfam" id="PF01405">
    <property type="entry name" value="PsbT"/>
    <property type="match status" value="1"/>
</dbReference>
<dbReference type="SUPFAM" id="SSF161029">
    <property type="entry name" value="Photosystem II reaction center protein T, PsbT"/>
    <property type="match status" value="1"/>
</dbReference>